<gene>
    <name type="ordered locus">Rv1510</name>
    <name type="ORF">MTCY277.32</name>
</gene>
<name>Y1510_MYCTU</name>
<reference key="1">
    <citation type="journal article" date="1998" name="Nature">
        <title>Deciphering the biology of Mycobacterium tuberculosis from the complete genome sequence.</title>
        <authorList>
            <person name="Cole S.T."/>
            <person name="Brosch R."/>
            <person name="Parkhill J."/>
            <person name="Garnier T."/>
            <person name="Churcher C.M."/>
            <person name="Harris D.E."/>
            <person name="Gordon S.V."/>
            <person name="Eiglmeier K."/>
            <person name="Gas S."/>
            <person name="Barry C.E. III"/>
            <person name="Tekaia F."/>
            <person name="Badcock K."/>
            <person name="Basham D."/>
            <person name="Brown D."/>
            <person name="Chillingworth T."/>
            <person name="Connor R."/>
            <person name="Davies R.M."/>
            <person name="Devlin K."/>
            <person name="Feltwell T."/>
            <person name="Gentles S."/>
            <person name="Hamlin N."/>
            <person name="Holroyd S."/>
            <person name="Hornsby T."/>
            <person name="Jagels K."/>
            <person name="Krogh A."/>
            <person name="McLean J."/>
            <person name="Moule S."/>
            <person name="Murphy L.D."/>
            <person name="Oliver S."/>
            <person name="Osborne J."/>
            <person name="Quail M.A."/>
            <person name="Rajandream M.A."/>
            <person name="Rogers J."/>
            <person name="Rutter S."/>
            <person name="Seeger K."/>
            <person name="Skelton S."/>
            <person name="Squares S."/>
            <person name="Squares R."/>
            <person name="Sulston J.E."/>
            <person name="Taylor K."/>
            <person name="Whitehead S."/>
            <person name="Barrell B.G."/>
        </authorList>
    </citation>
    <scope>NUCLEOTIDE SEQUENCE [LARGE SCALE GENOMIC DNA]</scope>
    <source>
        <strain>ATCC 25618 / H37Rv</strain>
    </source>
</reference>
<reference key="2">
    <citation type="journal article" date="2011" name="Mol. Cell. Proteomics">
        <title>Proteogenomic analysis of Mycobacterium tuberculosis by high resolution mass spectrometry.</title>
        <authorList>
            <person name="Kelkar D.S."/>
            <person name="Kumar D."/>
            <person name="Kumar P."/>
            <person name="Balakrishnan L."/>
            <person name="Muthusamy B."/>
            <person name="Yadav A.K."/>
            <person name="Shrivastava P."/>
            <person name="Marimuthu A."/>
            <person name="Anand S."/>
            <person name="Sundaram H."/>
            <person name="Kingsbury R."/>
            <person name="Harsha H.C."/>
            <person name="Nair B."/>
            <person name="Prasad T.S."/>
            <person name="Chauhan D.S."/>
            <person name="Katoch K."/>
            <person name="Katoch V.M."/>
            <person name="Kumar P."/>
            <person name="Chaerkady R."/>
            <person name="Ramachandran S."/>
            <person name="Dash D."/>
            <person name="Pandey A."/>
        </authorList>
    </citation>
    <scope>IDENTIFICATION BY MASS SPECTROMETRY [LARGE SCALE ANALYSIS]</scope>
    <source>
        <strain>ATCC 25618 / H37Rv</strain>
    </source>
</reference>
<organism>
    <name type="scientific">Mycobacterium tuberculosis (strain ATCC 25618 / H37Rv)</name>
    <dbReference type="NCBI Taxonomy" id="83332"/>
    <lineage>
        <taxon>Bacteria</taxon>
        <taxon>Bacillati</taxon>
        <taxon>Actinomycetota</taxon>
        <taxon>Actinomycetes</taxon>
        <taxon>Mycobacteriales</taxon>
        <taxon>Mycobacteriaceae</taxon>
        <taxon>Mycobacterium</taxon>
        <taxon>Mycobacterium tuberculosis complex</taxon>
    </lineage>
</organism>
<evidence type="ECO:0000255" key="1"/>
<evidence type="ECO:0000305" key="2"/>
<feature type="chain" id="PRO_0000103864" description="Uncharacterized protein Rv1510">
    <location>
        <begin position="1"/>
        <end position="432"/>
    </location>
</feature>
<feature type="transmembrane region" description="Helical" evidence="1">
    <location>
        <begin position="35"/>
        <end position="55"/>
    </location>
</feature>
<feature type="transmembrane region" description="Helical" evidence="1">
    <location>
        <begin position="60"/>
        <end position="80"/>
    </location>
</feature>
<feature type="transmembrane region" description="Helical" evidence="1">
    <location>
        <begin position="112"/>
        <end position="132"/>
    </location>
</feature>
<feature type="transmembrane region" description="Helical" evidence="1">
    <location>
        <begin position="144"/>
        <end position="164"/>
    </location>
</feature>
<feature type="transmembrane region" description="Helical" evidence="1">
    <location>
        <begin position="185"/>
        <end position="205"/>
    </location>
</feature>
<feature type="transmembrane region" description="Helical" evidence="1">
    <location>
        <begin position="209"/>
        <end position="229"/>
    </location>
</feature>
<feature type="transmembrane region" description="Helical" evidence="1">
    <location>
        <begin position="242"/>
        <end position="262"/>
    </location>
</feature>
<feature type="transmembrane region" description="Helical" evidence="1">
    <location>
        <begin position="274"/>
        <end position="294"/>
    </location>
</feature>
<feature type="transmembrane region" description="Helical" evidence="1">
    <location>
        <begin position="313"/>
        <end position="333"/>
    </location>
</feature>
<feature type="transmembrane region" description="Helical" evidence="1">
    <location>
        <begin position="359"/>
        <end position="379"/>
    </location>
</feature>
<feature type="transmembrane region" description="Helical" evidence="1">
    <location>
        <begin position="384"/>
        <end position="404"/>
    </location>
</feature>
<feature type="transmembrane region" description="Helical" evidence="1">
    <location>
        <begin position="408"/>
        <end position="428"/>
    </location>
</feature>
<protein>
    <recommendedName>
        <fullName>Uncharacterized protein Rv1510</fullName>
    </recommendedName>
</protein>
<accession>P9WLW1</accession>
<accession>L0T9M7</accession>
<accession>P71789</accession>
<comment type="subcellular location">
    <subcellularLocation>
        <location evidence="2">Cell membrane</location>
        <topology evidence="2">Multi-pass membrane protein</topology>
    </subcellularLocation>
</comment>
<comment type="similarity">
    <text evidence="2">To M.tuberculosis Rv3630 and M.bovis Mb3654.</text>
</comment>
<dbReference type="EMBL" id="AL123456">
    <property type="protein sequence ID" value="CCP44274.1"/>
    <property type="molecule type" value="Genomic_DNA"/>
</dbReference>
<dbReference type="PIR" id="A70714">
    <property type="entry name" value="A70714"/>
</dbReference>
<dbReference type="RefSeq" id="NP_216026.1">
    <property type="nucleotide sequence ID" value="NC_000962.3"/>
</dbReference>
<dbReference type="RefSeq" id="WP_003901183.1">
    <property type="nucleotide sequence ID" value="NZ_NVQJ01000004.1"/>
</dbReference>
<dbReference type="SMR" id="P9WLW1"/>
<dbReference type="STRING" id="83332.Rv1510"/>
<dbReference type="PaxDb" id="83332-Rv1510"/>
<dbReference type="GeneID" id="886466"/>
<dbReference type="KEGG" id="mtu:Rv1510"/>
<dbReference type="KEGG" id="mtv:RVBD_1510"/>
<dbReference type="PATRIC" id="fig|83332.111.peg.1684"/>
<dbReference type="TubercuList" id="Rv1510"/>
<dbReference type="eggNOG" id="COG2244">
    <property type="taxonomic scope" value="Bacteria"/>
</dbReference>
<dbReference type="InParanoid" id="P9WLW1"/>
<dbReference type="OrthoDB" id="4382106at2"/>
<dbReference type="PhylomeDB" id="P9WLW1"/>
<dbReference type="Proteomes" id="UP000001584">
    <property type="component" value="Chromosome"/>
</dbReference>
<dbReference type="GO" id="GO:0005886">
    <property type="term" value="C:plasma membrane"/>
    <property type="evidence" value="ECO:0000318"/>
    <property type="project" value="GO_Central"/>
</dbReference>
<dbReference type="GO" id="GO:0046812">
    <property type="term" value="F:host cell surface binding"/>
    <property type="evidence" value="ECO:0000314"/>
    <property type="project" value="MTBBASE"/>
</dbReference>
<dbReference type="InterPro" id="IPR050833">
    <property type="entry name" value="Poly_Biosynth_Transport"/>
</dbReference>
<dbReference type="PANTHER" id="PTHR30250:SF11">
    <property type="entry name" value="O-ANTIGEN TRANSPORTER-RELATED"/>
    <property type="match status" value="1"/>
</dbReference>
<dbReference type="PANTHER" id="PTHR30250">
    <property type="entry name" value="PST FAMILY PREDICTED COLANIC ACID TRANSPORTER"/>
    <property type="match status" value="1"/>
</dbReference>
<sequence>MYERRHERGMCDRAVEMTDVGATAAPTGPIARGSVARVGAATALAVACVYTVIYLAARDLPPACFSIFAVFWGALGIATGATHGLLQETTREVRWVRSTQIVAGHRTHPLRVAGMIGTVAAVVIAGSSPLWSRQLFVEGRWLSVGLLSVGVAGFCAQATLLGALAGVDRWTQYGSLMVTDAVIRLAVAAAAVVIGWGLAGYLWAATAGAVAWLLMLMASPTARSAASLLTPGGIATFVRGAAHSITAAGASAILVMGFPVLLKVTSDQLGAKGGAVILAVTLTRAPLLVPLSAMQGNLIAHFVDRRTQRLRALIAPALVVGGIGAVGMLAAGLTGPWLLRVGFGPDYQTGGALLAWLTAAAVAIAMLTLTGAAAVAAALHRAYLLGWVSATVASTLLLLLPMPLETRTVIALLFGPTVGIAIHVAALARRPD</sequence>
<keyword id="KW-1003">Cell membrane</keyword>
<keyword id="KW-0472">Membrane</keyword>
<keyword id="KW-1185">Reference proteome</keyword>
<keyword id="KW-0812">Transmembrane</keyword>
<keyword id="KW-1133">Transmembrane helix</keyword>
<proteinExistence type="evidence at protein level"/>